<comment type="function">
    <text evidence="1">Methylates ribosomal protein L11.</text>
</comment>
<comment type="catalytic activity">
    <reaction evidence="1">
        <text>L-lysyl-[protein] + 3 S-adenosyl-L-methionine = N(6),N(6),N(6)-trimethyl-L-lysyl-[protein] + 3 S-adenosyl-L-homocysteine + 3 H(+)</text>
        <dbReference type="Rhea" id="RHEA:54192"/>
        <dbReference type="Rhea" id="RHEA-COMP:9752"/>
        <dbReference type="Rhea" id="RHEA-COMP:13826"/>
        <dbReference type="ChEBI" id="CHEBI:15378"/>
        <dbReference type="ChEBI" id="CHEBI:29969"/>
        <dbReference type="ChEBI" id="CHEBI:57856"/>
        <dbReference type="ChEBI" id="CHEBI:59789"/>
        <dbReference type="ChEBI" id="CHEBI:61961"/>
    </reaction>
</comment>
<comment type="subcellular location">
    <subcellularLocation>
        <location evidence="1">Cytoplasm</location>
    </subcellularLocation>
</comment>
<comment type="similarity">
    <text evidence="1">Belongs to the methyltransferase superfamily. PrmA family.</text>
</comment>
<organism>
    <name type="scientific">Shewanella sediminis (strain HAW-EB3)</name>
    <dbReference type="NCBI Taxonomy" id="425104"/>
    <lineage>
        <taxon>Bacteria</taxon>
        <taxon>Pseudomonadati</taxon>
        <taxon>Pseudomonadota</taxon>
        <taxon>Gammaproteobacteria</taxon>
        <taxon>Alteromonadales</taxon>
        <taxon>Shewanellaceae</taxon>
        <taxon>Shewanella</taxon>
    </lineage>
</organism>
<protein>
    <recommendedName>
        <fullName evidence="1">Ribosomal protein L11 methyltransferase</fullName>
        <shortName evidence="1">L11 Mtase</shortName>
        <ecNumber evidence="1">2.1.1.-</ecNumber>
    </recommendedName>
</protein>
<sequence length="293" mass="32760">MPWIQLKIDTDNQHADALSDLLMEEGSLSITLEDGKDTPIYEPTLGETPLWNHTVLTALFEADRDLAIVVEQLKLQPYLGEDFSYKIEQVEDKDWEREWMDNFHPIKFGERLWICPSWREIPDPDAVNIILDPGLAFGTGTHPTTALCLEWLDSLDFADKEVIDFGCGSGILAVAALKLGATKVTGIDIDYQAIDASKANAERNGVEDQLALFLPEDQPKDLQADILVANILAGPLRELAPLIAEKVKTGGQLALSGLLKEQAEEVAEFYTQWFDMDEPAHKEDWSRLTGIRK</sequence>
<evidence type="ECO:0000255" key="1">
    <source>
        <dbReference type="HAMAP-Rule" id="MF_00735"/>
    </source>
</evidence>
<dbReference type="EC" id="2.1.1.-" evidence="1"/>
<dbReference type="EMBL" id="CP000821">
    <property type="protein sequence ID" value="ABV38721.1"/>
    <property type="molecule type" value="Genomic_DNA"/>
</dbReference>
<dbReference type="RefSeq" id="WP_012144451.1">
    <property type="nucleotide sequence ID" value="NC_009831.1"/>
</dbReference>
<dbReference type="SMR" id="A8G0U8"/>
<dbReference type="STRING" id="425104.Ssed_4117"/>
<dbReference type="KEGG" id="sse:Ssed_4117"/>
<dbReference type="eggNOG" id="COG2264">
    <property type="taxonomic scope" value="Bacteria"/>
</dbReference>
<dbReference type="HOGENOM" id="CLU_049382_4_1_6"/>
<dbReference type="OrthoDB" id="9785995at2"/>
<dbReference type="Proteomes" id="UP000002015">
    <property type="component" value="Chromosome"/>
</dbReference>
<dbReference type="GO" id="GO:0005829">
    <property type="term" value="C:cytosol"/>
    <property type="evidence" value="ECO:0007669"/>
    <property type="project" value="TreeGrafter"/>
</dbReference>
<dbReference type="GO" id="GO:0016279">
    <property type="term" value="F:protein-lysine N-methyltransferase activity"/>
    <property type="evidence" value="ECO:0007669"/>
    <property type="project" value="TreeGrafter"/>
</dbReference>
<dbReference type="GO" id="GO:0032259">
    <property type="term" value="P:methylation"/>
    <property type="evidence" value="ECO:0007669"/>
    <property type="project" value="UniProtKB-KW"/>
</dbReference>
<dbReference type="CDD" id="cd02440">
    <property type="entry name" value="AdoMet_MTases"/>
    <property type="match status" value="1"/>
</dbReference>
<dbReference type="Gene3D" id="3.40.50.150">
    <property type="entry name" value="Vaccinia Virus protein VP39"/>
    <property type="match status" value="1"/>
</dbReference>
<dbReference type="HAMAP" id="MF_00735">
    <property type="entry name" value="Methyltr_PrmA"/>
    <property type="match status" value="1"/>
</dbReference>
<dbReference type="InterPro" id="IPR050078">
    <property type="entry name" value="Ribosomal_L11_MeTrfase_PrmA"/>
</dbReference>
<dbReference type="InterPro" id="IPR004498">
    <property type="entry name" value="Ribosomal_PrmA_MeTrfase"/>
</dbReference>
<dbReference type="InterPro" id="IPR029063">
    <property type="entry name" value="SAM-dependent_MTases_sf"/>
</dbReference>
<dbReference type="NCBIfam" id="TIGR00406">
    <property type="entry name" value="prmA"/>
    <property type="match status" value="1"/>
</dbReference>
<dbReference type="PANTHER" id="PTHR43648">
    <property type="entry name" value="ELECTRON TRANSFER FLAVOPROTEIN BETA SUBUNIT LYSINE METHYLTRANSFERASE"/>
    <property type="match status" value="1"/>
</dbReference>
<dbReference type="PANTHER" id="PTHR43648:SF1">
    <property type="entry name" value="ELECTRON TRANSFER FLAVOPROTEIN BETA SUBUNIT LYSINE METHYLTRANSFERASE"/>
    <property type="match status" value="1"/>
</dbReference>
<dbReference type="Pfam" id="PF06325">
    <property type="entry name" value="PrmA"/>
    <property type="match status" value="1"/>
</dbReference>
<dbReference type="PIRSF" id="PIRSF000401">
    <property type="entry name" value="RPL11_MTase"/>
    <property type="match status" value="1"/>
</dbReference>
<dbReference type="SUPFAM" id="SSF53335">
    <property type="entry name" value="S-adenosyl-L-methionine-dependent methyltransferases"/>
    <property type="match status" value="1"/>
</dbReference>
<proteinExistence type="inferred from homology"/>
<feature type="chain" id="PRO_1000083362" description="Ribosomal protein L11 methyltransferase">
    <location>
        <begin position="1"/>
        <end position="293"/>
    </location>
</feature>
<feature type="binding site" evidence="1">
    <location>
        <position position="145"/>
    </location>
    <ligand>
        <name>S-adenosyl-L-methionine</name>
        <dbReference type="ChEBI" id="CHEBI:59789"/>
    </ligand>
</feature>
<feature type="binding site" evidence="1">
    <location>
        <position position="166"/>
    </location>
    <ligand>
        <name>S-adenosyl-L-methionine</name>
        <dbReference type="ChEBI" id="CHEBI:59789"/>
    </ligand>
</feature>
<feature type="binding site" evidence="1">
    <location>
        <position position="188"/>
    </location>
    <ligand>
        <name>S-adenosyl-L-methionine</name>
        <dbReference type="ChEBI" id="CHEBI:59789"/>
    </ligand>
</feature>
<feature type="binding site" evidence="1">
    <location>
        <position position="230"/>
    </location>
    <ligand>
        <name>S-adenosyl-L-methionine</name>
        <dbReference type="ChEBI" id="CHEBI:59789"/>
    </ligand>
</feature>
<accession>A8G0U8</accession>
<keyword id="KW-0963">Cytoplasm</keyword>
<keyword id="KW-0489">Methyltransferase</keyword>
<keyword id="KW-1185">Reference proteome</keyword>
<keyword id="KW-0949">S-adenosyl-L-methionine</keyword>
<keyword id="KW-0808">Transferase</keyword>
<gene>
    <name evidence="1" type="primary">prmA</name>
    <name type="ordered locus">Ssed_4117</name>
</gene>
<reference key="1">
    <citation type="submission" date="2007-08" db="EMBL/GenBank/DDBJ databases">
        <title>Complete sequence of Shewanella sediminis HAW-EB3.</title>
        <authorList>
            <consortium name="US DOE Joint Genome Institute"/>
            <person name="Copeland A."/>
            <person name="Lucas S."/>
            <person name="Lapidus A."/>
            <person name="Barry K."/>
            <person name="Glavina del Rio T."/>
            <person name="Dalin E."/>
            <person name="Tice H."/>
            <person name="Pitluck S."/>
            <person name="Chertkov O."/>
            <person name="Brettin T."/>
            <person name="Bruce D."/>
            <person name="Detter J.C."/>
            <person name="Han C."/>
            <person name="Schmutz J."/>
            <person name="Larimer F."/>
            <person name="Land M."/>
            <person name="Hauser L."/>
            <person name="Kyrpides N."/>
            <person name="Kim E."/>
            <person name="Zhao J.-S."/>
            <person name="Richardson P."/>
        </authorList>
    </citation>
    <scope>NUCLEOTIDE SEQUENCE [LARGE SCALE GENOMIC DNA]</scope>
    <source>
        <strain>HAW-EB3</strain>
    </source>
</reference>
<name>PRMA_SHESH</name>